<organism>
    <name type="scientific">Buchnera aphidicola subsp. Acyrthosiphon pisum (strain APS)</name>
    <name type="common">Acyrthosiphon pisum symbiotic bacterium</name>
    <dbReference type="NCBI Taxonomy" id="107806"/>
    <lineage>
        <taxon>Bacteria</taxon>
        <taxon>Pseudomonadati</taxon>
        <taxon>Pseudomonadota</taxon>
        <taxon>Gammaproteobacteria</taxon>
        <taxon>Enterobacterales</taxon>
        <taxon>Erwiniaceae</taxon>
        <taxon>Buchnera</taxon>
    </lineage>
</organism>
<dbReference type="EC" id="4.2.1.11" evidence="1"/>
<dbReference type="EMBL" id="BA000003">
    <property type="protein sequence ID" value="BAB13115.1"/>
    <property type="molecule type" value="Genomic_DNA"/>
</dbReference>
<dbReference type="RefSeq" id="NP_240229.1">
    <property type="nucleotide sequence ID" value="NC_002528.1"/>
</dbReference>
<dbReference type="RefSeq" id="WP_010896105.1">
    <property type="nucleotide sequence ID" value="NC_002528.1"/>
</dbReference>
<dbReference type="SMR" id="P57492"/>
<dbReference type="STRING" id="563178.BUAP5A_410"/>
<dbReference type="EnsemblBacteria" id="BAB13115">
    <property type="protein sequence ID" value="BAB13115"/>
    <property type="gene ID" value="BAB13115"/>
</dbReference>
<dbReference type="KEGG" id="buc:BU417"/>
<dbReference type="PATRIC" id="fig|107806.10.peg.426"/>
<dbReference type="eggNOG" id="COG0148">
    <property type="taxonomic scope" value="Bacteria"/>
</dbReference>
<dbReference type="HOGENOM" id="CLU_031223_2_1_6"/>
<dbReference type="UniPathway" id="UPA00109">
    <property type="reaction ID" value="UER00187"/>
</dbReference>
<dbReference type="Proteomes" id="UP000001806">
    <property type="component" value="Chromosome"/>
</dbReference>
<dbReference type="GO" id="GO:0009986">
    <property type="term" value="C:cell surface"/>
    <property type="evidence" value="ECO:0007669"/>
    <property type="project" value="UniProtKB-SubCell"/>
</dbReference>
<dbReference type="GO" id="GO:0005576">
    <property type="term" value="C:extracellular region"/>
    <property type="evidence" value="ECO:0007669"/>
    <property type="project" value="UniProtKB-SubCell"/>
</dbReference>
<dbReference type="GO" id="GO:0000015">
    <property type="term" value="C:phosphopyruvate hydratase complex"/>
    <property type="evidence" value="ECO:0007669"/>
    <property type="project" value="InterPro"/>
</dbReference>
<dbReference type="GO" id="GO:0000287">
    <property type="term" value="F:magnesium ion binding"/>
    <property type="evidence" value="ECO:0007669"/>
    <property type="project" value="UniProtKB-UniRule"/>
</dbReference>
<dbReference type="GO" id="GO:0004634">
    <property type="term" value="F:phosphopyruvate hydratase activity"/>
    <property type="evidence" value="ECO:0007669"/>
    <property type="project" value="UniProtKB-UniRule"/>
</dbReference>
<dbReference type="GO" id="GO:0006096">
    <property type="term" value="P:glycolytic process"/>
    <property type="evidence" value="ECO:0007669"/>
    <property type="project" value="UniProtKB-UniRule"/>
</dbReference>
<dbReference type="CDD" id="cd03313">
    <property type="entry name" value="enolase"/>
    <property type="match status" value="1"/>
</dbReference>
<dbReference type="FunFam" id="3.20.20.120:FF:000001">
    <property type="entry name" value="Enolase"/>
    <property type="match status" value="1"/>
</dbReference>
<dbReference type="FunFam" id="3.30.390.10:FF:000001">
    <property type="entry name" value="Enolase"/>
    <property type="match status" value="1"/>
</dbReference>
<dbReference type="Gene3D" id="3.20.20.120">
    <property type="entry name" value="Enolase-like C-terminal domain"/>
    <property type="match status" value="1"/>
</dbReference>
<dbReference type="Gene3D" id="3.30.390.10">
    <property type="entry name" value="Enolase-like, N-terminal domain"/>
    <property type="match status" value="1"/>
</dbReference>
<dbReference type="HAMAP" id="MF_00318">
    <property type="entry name" value="Enolase"/>
    <property type="match status" value="1"/>
</dbReference>
<dbReference type="InterPro" id="IPR000941">
    <property type="entry name" value="Enolase"/>
</dbReference>
<dbReference type="InterPro" id="IPR036849">
    <property type="entry name" value="Enolase-like_C_sf"/>
</dbReference>
<dbReference type="InterPro" id="IPR029017">
    <property type="entry name" value="Enolase-like_N"/>
</dbReference>
<dbReference type="InterPro" id="IPR020810">
    <property type="entry name" value="Enolase_C"/>
</dbReference>
<dbReference type="InterPro" id="IPR020809">
    <property type="entry name" value="Enolase_CS"/>
</dbReference>
<dbReference type="InterPro" id="IPR020811">
    <property type="entry name" value="Enolase_N"/>
</dbReference>
<dbReference type="NCBIfam" id="TIGR01060">
    <property type="entry name" value="eno"/>
    <property type="match status" value="1"/>
</dbReference>
<dbReference type="PANTHER" id="PTHR11902">
    <property type="entry name" value="ENOLASE"/>
    <property type="match status" value="1"/>
</dbReference>
<dbReference type="PANTHER" id="PTHR11902:SF1">
    <property type="entry name" value="ENOLASE"/>
    <property type="match status" value="1"/>
</dbReference>
<dbReference type="Pfam" id="PF00113">
    <property type="entry name" value="Enolase_C"/>
    <property type="match status" value="1"/>
</dbReference>
<dbReference type="Pfam" id="PF03952">
    <property type="entry name" value="Enolase_N"/>
    <property type="match status" value="1"/>
</dbReference>
<dbReference type="PIRSF" id="PIRSF001400">
    <property type="entry name" value="Enolase"/>
    <property type="match status" value="1"/>
</dbReference>
<dbReference type="PRINTS" id="PR00148">
    <property type="entry name" value="ENOLASE"/>
</dbReference>
<dbReference type="SFLD" id="SFLDS00001">
    <property type="entry name" value="Enolase"/>
    <property type="match status" value="1"/>
</dbReference>
<dbReference type="SFLD" id="SFLDF00002">
    <property type="entry name" value="enolase"/>
    <property type="match status" value="1"/>
</dbReference>
<dbReference type="SMART" id="SM01192">
    <property type="entry name" value="Enolase_C"/>
    <property type="match status" value="1"/>
</dbReference>
<dbReference type="SMART" id="SM01193">
    <property type="entry name" value="Enolase_N"/>
    <property type="match status" value="1"/>
</dbReference>
<dbReference type="SUPFAM" id="SSF51604">
    <property type="entry name" value="Enolase C-terminal domain-like"/>
    <property type="match status" value="1"/>
</dbReference>
<dbReference type="SUPFAM" id="SSF54826">
    <property type="entry name" value="Enolase N-terminal domain-like"/>
    <property type="match status" value="1"/>
</dbReference>
<dbReference type="PROSITE" id="PS00164">
    <property type="entry name" value="ENOLASE"/>
    <property type="match status" value="1"/>
</dbReference>
<sequence>MSKITKIIAREIIDSRGNPTVESEVHLEGGFVGLASSPSGASTGSLEALELRDENKDRFMGKGVEKAVSLINEKISIALKNKNARNQSDIDHIMIDLDGTINKSKLGANAILSVSLAVAKAAAASKRMPLYAHIAEINETPGVFSMPLPMINIINGGKHANNNIDIQEFMIQPISAKTVKESIRIGCEIFHALGELLKEKGMSTTVGDEGGYAPNLKSNEEALNIIQDAIQKTKYKLGQDIRLAIDCAASELYNKNEKKYNLKGENISFSSKEFTHYLEKLSQKYPIVSIEDGQDESDWEGFLYQTHVLGNKIQLVGDDLFVTNKNILKKGIKKGIANSILIKLNQIGTLTETLEAIKTAKQANYGVIISHRSGETEDASIADLSVGTSSGQIKTGSMSRSDRTSKYNQLIRIEENLGTKYAPFHGLREIKSAF</sequence>
<protein>
    <recommendedName>
        <fullName evidence="1">Enolase</fullName>
        <ecNumber evidence="1">4.2.1.11</ecNumber>
    </recommendedName>
    <alternativeName>
        <fullName evidence="1">2-phospho-D-glycerate hydro-lyase</fullName>
    </alternativeName>
    <alternativeName>
        <fullName evidence="1">2-phosphoglycerate dehydratase</fullName>
    </alternativeName>
</protein>
<evidence type="ECO:0000255" key="1">
    <source>
        <dbReference type="HAMAP-Rule" id="MF_00318"/>
    </source>
</evidence>
<reference key="1">
    <citation type="journal article" date="2000" name="Nature">
        <title>Genome sequence of the endocellular bacterial symbiont of aphids Buchnera sp. APS.</title>
        <authorList>
            <person name="Shigenobu S."/>
            <person name="Watanabe H."/>
            <person name="Hattori M."/>
            <person name="Sakaki Y."/>
            <person name="Ishikawa H."/>
        </authorList>
    </citation>
    <scope>NUCLEOTIDE SEQUENCE [LARGE SCALE GENOMIC DNA]</scope>
    <source>
        <strain>APS</strain>
    </source>
</reference>
<proteinExistence type="inferred from homology"/>
<feature type="chain" id="PRO_0000133855" description="Enolase">
    <location>
        <begin position="1"/>
        <end position="434"/>
    </location>
</feature>
<feature type="active site" description="Proton donor" evidence="1">
    <location>
        <position position="209"/>
    </location>
</feature>
<feature type="active site" description="Proton acceptor" evidence="1">
    <location>
        <position position="343"/>
    </location>
</feature>
<feature type="binding site" evidence="1">
    <location>
        <position position="167"/>
    </location>
    <ligand>
        <name>(2R)-2-phosphoglycerate</name>
        <dbReference type="ChEBI" id="CHEBI:58289"/>
    </ligand>
</feature>
<feature type="binding site" evidence="1">
    <location>
        <position position="246"/>
    </location>
    <ligand>
        <name>Mg(2+)</name>
        <dbReference type="ChEBI" id="CHEBI:18420"/>
    </ligand>
</feature>
<feature type="binding site" evidence="1">
    <location>
        <position position="291"/>
    </location>
    <ligand>
        <name>Mg(2+)</name>
        <dbReference type="ChEBI" id="CHEBI:18420"/>
    </ligand>
</feature>
<feature type="binding site" evidence="1">
    <location>
        <position position="318"/>
    </location>
    <ligand>
        <name>Mg(2+)</name>
        <dbReference type="ChEBI" id="CHEBI:18420"/>
    </ligand>
</feature>
<feature type="binding site" evidence="1">
    <location>
        <position position="343"/>
    </location>
    <ligand>
        <name>(2R)-2-phosphoglycerate</name>
        <dbReference type="ChEBI" id="CHEBI:58289"/>
    </ligand>
</feature>
<feature type="binding site" evidence="1">
    <location>
        <position position="372"/>
    </location>
    <ligand>
        <name>(2R)-2-phosphoglycerate</name>
        <dbReference type="ChEBI" id="CHEBI:58289"/>
    </ligand>
</feature>
<feature type="binding site" evidence="1">
    <location>
        <position position="373"/>
    </location>
    <ligand>
        <name>(2R)-2-phosphoglycerate</name>
        <dbReference type="ChEBI" id="CHEBI:58289"/>
    </ligand>
</feature>
<feature type="binding site" evidence="1">
    <location>
        <position position="394"/>
    </location>
    <ligand>
        <name>(2R)-2-phosphoglycerate</name>
        <dbReference type="ChEBI" id="CHEBI:58289"/>
    </ligand>
</feature>
<name>ENO_BUCAI</name>
<gene>
    <name evidence="1" type="primary">eno</name>
    <name type="ordered locus">BU417</name>
</gene>
<keyword id="KW-0963">Cytoplasm</keyword>
<keyword id="KW-0324">Glycolysis</keyword>
<keyword id="KW-0456">Lyase</keyword>
<keyword id="KW-0460">Magnesium</keyword>
<keyword id="KW-0479">Metal-binding</keyword>
<keyword id="KW-1185">Reference proteome</keyword>
<keyword id="KW-0964">Secreted</keyword>
<comment type="function">
    <text evidence="1">Catalyzes the reversible conversion of 2-phosphoglycerate (2-PG) into phosphoenolpyruvate (PEP). It is essential for the degradation of carbohydrates via glycolysis.</text>
</comment>
<comment type="catalytic activity">
    <reaction evidence="1">
        <text>(2R)-2-phosphoglycerate = phosphoenolpyruvate + H2O</text>
        <dbReference type="Rhea" id="RHEA:10164"/>
        <dbReference type="ChEBI" id="CHEBI:15377"/>
        <dbReference type="ChEBI" id="CHEBI:58289"/>
        <dbReference type="ChEBI" id="CHEBI:58702"/>
        <dbReference type="EC" id="4.2.1.11"/>
    </reaction>
</comment>
<comment type="cofactor">
    <cofactor evidence="1">
        <name>Mg(2+)</name>
        <dbReference type="ChEBI" id="CHEBI:18420"/>
    </cofactor>
    <text evidence="1">Binds a second Mg(2+) ion via substrate during catalysis.</text>
</comment>
<comment type="pathway">
    <text evidence="1">Carbohydrate degradation; glycolysis; pyruvate from D-glyceraldehyde 3-phosphate: step 4/5.</text>
</comment>
<comment type="subunit">
    <text evidence="1">Component of the RNA degradosome, a multiprotein complex involved in RNA processing and mRNA degradation.</text>
</comment>
<comment type="subcellular location">
    <subcellularLocation>
        <location evidence="1">Cytoplasm</location>
    </subcellularLocation>
    <subcellularLocation>
        <location evidence="1">Secreted</location>
    </subcellularLocation>
    <subcellularLocation>
        <location evidence="1">Cell surface</location>
    </subcellularLocation>
    <text evidence="1">Fractions of enolase are present in both the cytoplasm and on the cell surface.</text>
</comment>
<comment type="similarity">
    <text evidence="1">Belongs to the enolase family.</text>
</comment>
<accession>P57492</accession>